<comment type="function">
    <text evidence="1">Endonuclease that specifically degrades the RNA of RNA-DNA hybrids.</text>
</comment>
<comment type="catalytic activity">
    <reaction evidence="1">
        <text>Endonucleolytic cleavage to 5'-phosphomonoester.</text>
        <dbReference type="EC" id="3.1.26.4"/>
    </reaction>
</comment>
<comment type="cofactor">
    <cofactor evidence="1">
        <name>Mn(2+)</name>
        <dbReference type="ChEBI" id="CHEBI:29035"/>
    </cofactor>
    <cofactor evidence="1">
        <name>Mg(2+)</name>
        <dbReference type="ChEBI" id="CHEBI:18420"/>
    </cofactor>
    <text evidence="1">Manganese or magnesium. Binds 1 divalent metal ion per monomer in the absence of substrate. May bind a second metal ion after substrate binding.</text>
</comment>
<comment type="subcellular location">
    <subcellularLocation>
        <location evidence="1">Cytoplasm</location>
    </subcellularLocation>
</comment>
<comment type="similarity">
    <text evidence="1">Belongs to the RNase HII family.</text>
</comment>
<sequence length="198" mass="21466">MIEFVYPHTQLVAGVDEVGRGPLVGAVVTAAVILDPARPIAGLNDSKKLSEKRRLALCEEIKEKALSWSLGRAEPHEIDELNILHATMLAMQRAVAGLHIAPEYVLIDGNRCPKLPMPAMAVVKGDSRVPEISAASILAKVTRDAEMAALDIVFPQYGFAQHKGYPTAFHLEKLAEHGATEHHRRSFGPVKRALGLAS</sequence>
<feature type="chain" id="PRO_1000091657" description="Ribonuclease HII">
    <location>
        <begin position="1"/>
        <end position="198"/>
    </location>
</feature>
<feature type="domain" description="RNase H type-2" evidence="2">
    <location>
        <begin position="10"/>
        <end position="198"/>
    </location>
</feature>
<feature type="binding site" evidence="1">
    <location>
        <position position="16"/>
    </location>
    <ligand>
        <name>a divalent metal cation</name>
        <dbReference type="ChEBI" id="CHEBI:60240"/>
    </ligand>
</feature>
<feature type="binding site" evidence="1">
    <location>
        <position position="17"/>
    </location>
    <ligand>
        <name>a divalent metal cation</name>
        <dbReference type="ChEBI" id="CHEBI:60240"/>
    </ligand>
</feature>
<feature type="binding site" evidence="1">
    <location>
        <position position="108"/>
    </location>
    <ligand>
        <name>a divalent metal cation</name>
        <dbReference type="ChEBI" id="CHEBI:60240"/>
    </ligand>
</feature>
<organism>
    <name type="scientific">Shigella boydii serotype 18 (strain CDC 3083-94 / BS512)</name>
    <dbReference type="NCBI Taxonomy" id="344609"/>
    <lineage>
        <taxon>Bacteria</taxon>
        <taxon>Pseudomonadati</taxon>
        <taxon>Pseudomonadota</taxon>
        <taxon>Gammaproteobacteria</taxon>
        <taxon>Enterobacterales</taxon>
        <taxon>Enterobacteriaceae</taxon>
        <taxon>Shigella</taxon>
    </lineage>
</organism>
<gene>
    <name evidence="1" type="primary">rnhB</name>
    <name type="ordered locus">SbBS512_E0176</name>
</gene>
<evidence type="ECO:0000255" key="1">
    <source>
        <dbReference type="HAMAP-Rule" id="MF_00052"/>
    </source>
</evidence>
<evidence type="ECO:0000255" key="2">
    <source>
        <dbReference type="PROSITE-ProRule" id="PRU01319"/>
    </source>
</evidence>
<proteinExistence type="inferred from homology"/>
<keyword id="KW-0963">Cytoplasm</keyword>
<keyword id="KW-0255">Endonuclease</keyword>
<keyword id="KW-0378">Hydrolase</keyword>
<keyword id="KW-0464">Manganese</keyword>
<keyword id="KW-0479">Metal-binding</keyword>
<keyword id="KW-0540">Nuclease</keyword>
<keyword id="KW-1185">Reference proteome</keyword>
<name>RNH2_SHIB3</name>
<accession>B2U326</accession>
<protein>
    <recommendedName>
        <fullName evidence="1">Ribonuclease HII</fullName>
        <shortName evidence="1">RNase HII</shortName>
        <ecNumber evidence="1">3.1.26.4</ecNumber>
    </recommendedName>
</protein>
<reference key="1">
    <citation type="submission" date="2008-05" db="EMBL/GenBank/DDBJ databases">
        <title>Complete sequence of Shigella boydii serotype 18 strain BS512.</title>
        <authorList>
            <person name="Rasko D.A."/>
            <person name="Rosovitz M."/>
            <person name="Maurelli A.T."/>
            <person name="Myers G."/>
            <person name="Seshadri R."/>
            <person name="Cer R."/>
            <person name="Jiang L."/>
            <person name="Ravel J."/>
            <person name="Sebastian Y."/>
        </authorList>
    </citation>
    <scope>NUCLEOTIDE SEQUENCE [LARGE SCALE GENOMIC DNA]</scope>
    <source>
        <strain>CDC 3083-94 / BS512</strain>
    </source>
</reference>
<dbReference type="EC" id="3.1.26.4" evidence="1"/>
<dbReference type="EMBL" id="CP001063">
    <property type="protein sequence ID" value="ACD07411.1"/>
    <property type="molecule type" value="Genomic_DNA"/>
</dbReference>
<dbReference type="RefSeq" id="WP_000569419.1">
    <property type="nucleotide sequence ID" value="NC_010658.1"/>
</dbReference>
<dbReference type="SMR" id="B2U326"/>
<dbReference type="STRING" id="344609.SbBS512_E0176"/>
<dbReference type="KEGG" id="sbc:SbBS512_E0176"/>
<dbReference type="HOGENOM" id="CLU_036532_3_2_6"/>
<dbReference type="Proteomes" id="UP000001030">
    <property type="component" value="Chromosome"/>
</dbReference>
<dbReference type="GO" id="GO:0005737">
    <property type="term" value="C:cytoplasm"/>
    <property type="evidence" value="ECO:0007669"/>
    <property type="project" value="UniProtKB-SubCell"/>
</dbReference>
<dbReference type="GO" id="GO:0032299">
    <property type="term" value="C:ribonuclease H2 complex"/>
    <property type="evidence" value="ECO:0007669"/>
    <property type="project" value="TreeGrafter"/>
</dbReference>
<dbReference type="GO" id="GO:0030145">
    <property type="term" value="F:manganese ion binding"/>
    <property type="evidence" value="ECO:0007669"/>
    <property type="project" value="UniProtKB-UniRule"/>
</dbReference>
<dbReference type="GO" id="GO:0003723">
    <property type="term" value="F:RNA binding"/>
    <property type="evidence" value="ECO:0007669"/>
    <property type="project" value="InterPro"/>
</dbReference>
<dbReference type="GO" id="GO:0004523">
    <property type="term" value="F:RNA-DNA hybrid ribonuclease activity"/>
    <property type="evidence" value="ECO:0007669"/>
    <property type="project" value="UniProtKB-UniRule"/>
</dbReference>
<dbReference type="GO" id="GO:0043137">
    <property type="term" value="P:DNA replication, removal of RNA primer"/>
    <property type="evidence" value="ECO:0007669"/>
    <property type="project" value="TreeGrafter"/>
</dbReference>
<dbReference type="GO" id="GO:0006298">
    <property type="term" value="P:mismatch repair"/>
    <property type="evidence" value="ECO:0007669"/>
    <property type="project" value="TreeGrafter"/>
</dbReference>
<dbReference type="CDD" id="cd07182">
    <property type="entry name" value="RNase_HII_bacteria_HII_like"/>
    <property type="match status" value="1"/>
</dbReference>
<dbReference type="FunFam" id="3.30.420.10:FF:000006">
    <property type="entry name" value="Ribonuclease HII"/>
    <property type="match status" value="1"/>
</dbReference>
<dbReference type="Gene3D" id="3.30.420.10">
    <property type="entry name" value="Ribonuclease H-like superfamily/Ribonuclease H"/>
    <property type="match status" value="1"/>
</dbReference>
<dbReference type="HAMAP" id="MF_00052_B">
    <property type="entry name" value="RNase_HII_B"/>
    <property type="match status" value="1"/>
</dbReference>
<dbReference type="InterPro" id="IPR022898">
    <property type="entry name" value="RNase_HII"/>
</dbReference>
<dbReference type="InterPro" id="IPR001352">
    <property type="entry name" value="RNase_HII/HIII"/>
</dbReference>
<dbReference type="InterPro" id="IPR024567">
    <property type="entry name" value="RNase_HII/HIII_dom"/>
</dbReference>
<dbReference type="InterPro" id="IPR012337">
    <property type="entry name" value="RNaseH-like_sf"/>
</dbReference>
<dbReference type="InterPro" id="IPR036397">
    <property type="entry name" value="RNaseH_sf"/>
</dbReference>
<dbReference type="NCBIfam" id="NF000594">
    <property type="entry name" value="PRK00015.1-1"/>
    <property type="match status" value="1"/>
</dbReference>
<dbReference type="NCBIfam" id="NF000595">
    <property type="entry name" value="PRK00015.1-3"/>
    <property type="match status" value="1"/>
</dbReference>
<dbReference type="NCBIfam" id="NF000596">
    <property type="entry name" value="PRK00015.1-4"/>
    <property type="match status" value="1"/>
</dbReference>
<dbReference type="PANTHER" id="PTHR10954">
    <property type="entry name" value="RIBONUCLEASE H2 SUBUNIT A"/>
    <property type="match status" value="1"/>
</dbReference>
<dbReference type="PANTHER" id="PTHR10954:SF18">
    <property type="entry name" value="RIBONUCLEASE HII"/>
    <property type="match status" value="1"/>
</dbReference>
<dbReference type="Pfam" id="PF01351">
    <property type="entry name" value="RNase_HII"/>
    <property type="match status" value="1"/>
</dbReference>
<dbReference type="SUPFAM" id="SSF53098">
    <property type="entry name" value="Ribonuclease H-like"/>
    <property type="match status" value="1"/>
</dbReference>
<dbReference type="PROSITE" id="PS51975">
    <property type="entry name" value="RNASE_H_2"/>
    <property type="match status" value="1"/>
</dbReference>